<sequence length="255" mass="28638">MSSSSYEAASIKEIFCSVQGEGPYVGVRQAFVRFSGCNLNCNYCDTNFENLGTCDYEIIEGNGIFEKIPNPINVEKLESLLQPFKKLHSVSLTGGEPLLHADFIEKLKLPVPLYLESNMTLPEQARKLRENITYVAGDFKLPEALREIRPETRDMHVENTIKCFSLLKKNKLRDCFCKIVVGRDTRPETVVLAAEAIASDVSCIILQPETPVGSAVRTPRFTQASVQTILKLQKTLLELADTRIIPQTHRMWGCL</sequence>
<organism>
    <name type="scientific">Methanosarcina acetivorans (strain ATCC 35395 / DSM 2834 / JCM 12185 / C2A)</name>
    <dbReference type="NCBI Taxonomy" id="188937"/>
    <lineage>
        <taxon>Archaea</taxon>
        <taxon>Methanobacteriati</taxon>
        <taxon>Methanobacteriota</taxon>
        <taxon>Stenosarchaea group</taxon>
        <taxon>Methanomicrobia</taxon>
        <taxon>Methanosarcinales</taxon>
        <taxon>Methanosarcinaceae</taxon>
        <taxon>Methanosarcina</taxon>
    </lineage>
</organism>
<protein>
    <recommendedName>
        <fullName evidence="1">7-carboxy-7-deazaguanine synthase</fullName>
        <shortName evidence="1">CDG synthase</shortName>
        <ecNumber evidence="1">4.3.99.3</ecNumber>
    </recommendedName>
    <alternativeName>
        <fullName evidence="1">Archaeosine biosynthesis protein QueE</fullName>
    </alternativeName>
</protein>
<evidence type="ECO:0000255" key="1">
    <source>
        <dbReference type="HAMAP-Rule" id="MF_00917"/>
    </source>
</evidence>
<evidence type="ECO:0000255" key="2">
    <source>
        <dbReference type="PROSITE-ProRule" id="PRU01266"/>
    </source>
</evidence>
<dbReference type="EC" id="4.3.99.3" evidence="1"/>
<dbReference type="EMBL" id="AE010299">
    <property type="protein sequence ID" value="AAM07543.1"/>
    <property type="molecule type" value="Genomic_DNA"/>
</dbReference>
<dbReference type="RefSeq" id="WP_011024082.1">
    <property type="nucleotide sequence ID" value="NC_003552.1"/>
</dbReference>
<dbReference type="SMR" id="Q8TIF5"/>
<dbReference type="FunCoup" id="Q8TIF5">
    <property type="interactions" value="2"/>
</dbReference>
<dbReference type="STRING" id="188937.MA_4197"/>
<dbReference type="EnsemblBacteria" id="AAM07543">
    <property type="protein sequence ID" value="AAM07543"/>
    <property type="gene ID" value="MA_4197"/>
</dbReference>
<dbReference type="GeneID" id="1476091"/>
<dbReference type="KEGG" id="mac:MA_4197"/>
<dbReference type="HOGENOM" id="CLU_066739_1_0_2"/>
<dbReference type="InParanoid" id="Q8TIF5"/>
<dbReference type="OrthoDB" id="7980at2157"/>
<dbReference type="PhylomeDB" id="Q8TIF5"/>
<dbReference type="UniPathway" id="UPA00391"/>
<dbReference type="Proteomes" id="UP000002487">
    <property type="component" value="Chromosome"/>
</dbReference>
<dbReference type="GO" id="GO:0051539">
    <property type="term" value="F:4 iron, 4 sulfur cluster binding"/>
    <property type="evidence" value="ECO:0007669"/>
    <property type="project" value="UniProtKB-UniRule"/>
</dbReference>
<dbReference type="GO" id="GO:0016840">
    <property type="term" value="F:carbon-nitrogen lyase activity"/>
    <property type="evidence" value="ECO:0007669"/>
    <property type="project" value="UniProtKB-UniRule"/>
</dbReference>
<dbReference type="GO" id="GO:0000287">
    <property type="term" value="F:magnesium ion binding"/>
    <property type="evidence" value="ECO:0007669"/>
    <property type="project" value="UniProtKB-UniRule"/>
</dbReference>
<dbReference type="GO" id="GO:1904047">
    <property type="term" value="F:S-adenosyl-L-methionine binding"/>
    <property type="evidence" value="ECO:0007669"/>
    <property type="project" value="UniProtKB-UniRule"/>
</dbReference>
<dbReference type="CDD" id="cd01335">
    <property type="entry name" value="Radical_SAM"/>
    <property type="match status" value="1"/>
</dbReference>
<dbReference type="Gene3D" id="3.20.20.70">
    <property type="entry name" value="Aldolase class I"/>
    <property type="match status" value="1"/>
</dbReference>
<dbReference type="HAMAP" id="MF_00917">
    <property type="entry name" value="QueE"/>
    <property type="match status" value="1"/>
</dbReference>
<dbReference type="InterPro" id="IPR024924">
    <property type="entry name" value="7-CO-7-deazaguanine_synth-like"/>
</dbReference>
<dbReference type="InterPro" id="IPR013785">
    <property type="entry name" value="Aldolase_TIM"/>
</dbReference>
<dbReference type="InterPro" id="IPR007197">
    <property type="entry name" value="rSAM"/>
</dbReference>
<dbReference type="PANTHER" id="PTHR42836">
    <property type="entry name" value="7-CARBOXY-7-DEAZAGUANINE SYNTHASE"/>
    <property type="match status" value="1"/>
</dbReference>
<dbReference type="PANTHER" id="PTHR42836:SF1">
    <property type="entry name" value="7-CARBOXY-7-DEAZAGUANINE SYNTHASE"/>
    <property type="match status" value="1"/>
</dbReference>
<dbReference type="Pfam" id="PF04055">
    <property type="entry name" value="Radical_SAM"/>
    <property type="match status" value="1"/>
</dbReference>
<dbReference type="SFLD" id="SFLDS00029">
    <property type="entry name" value="Radical_SAM"/>
    <property type="match status" value="1"/>
</dbReference>
<dbReference type="SUPFAM" id="SSF102114">
    <property type="entry name" value="Radical SAM enzymes"/>
    <property type="match status" value="1"/>
</dbReference>
<dbReference type="PROSITE" id="PS51918">
    <property type="entry name" value="RADICAL_SAM"/>
    <property type="match status" value="1"/>
</dbReference>
<reference key="1">
    <citation type="journal article" date="2002" name="Genome Res.">
        <title>The genome of Methanosarcina acetivorans reveals extensive metabolic and physiological diversity.</title>
        <authorList>
            <person name="Galagan J.E."/>
            <person name="Nusbaum C."/>
            <person name="Roy A."/>
            <person name="Endrizzi M.G."/>
            <person name="Macdonald P."/>
            <person name="FitzHugh W."/>
            <person name="Calvo S."/>
            <person name="Engels R."/>
            <person name="Smirnov S."/>
            <person name="Atnoor D."/>
            <person name="Brown A."/>
            <person name="Allen N."/>
            <person name="Naylor J."/>
            <person name="Stange-Thomann N."/>
            <person name="DeArellano K."/>
            <person name="Johnson R."/>
            <person name="Linton L."/>
            <person name="McEwan P."/>
            <person name="McKernan K."/>
            <person name="Talamas J."/>
            <person name="Tirrell A."/>
            <person name="Ye W."/>
            <person name="Zimmer A."/>
            <person name="Barber R.D."/>
            <person name="Cann I."/>
            <person name="Graham D.E."/>
            <person name="Grahame D.A."/>
            <person name="Guss A.M."/>
            <person name="Hedderich R."/>
            <person name="Ingram-Smith C."/>
            <person name="Kuettner H.C."/>
            <person name="Krzycki J.A."/>
            <person name="Leigh J.A."/>
            <person name="Li W."/>
            <person name="Liu J."/>
            <person name="Mukhopadhyay B."/>
            <person name="Reeve J.N."/>
            <person name="Smith K."/>
            <person name="Springer T.A."/>
            <person name="Umayam L.A."/>
            <person name="White O."/>
            <person name="White R.H."/>
            <person name="de Macario E.C."/>
            <person name="Ferry J.G."/>
            <person name="Jarrell K.F."/>
            <person name="Jing H."/>
            <person name="Macario A.J.L."/>
            <person name="Paulsen I.T."/>
            <person name="Pritchett M."/>
            <person name="Sowers K.R."/>
            <person name="Swanson R.V."/>
            <person name="Zinder S.H."/>
            <person name="Lander E."/>
            <person name="Metcalf W.W."/>
            <person name="Birren B."/>
        </authorList>
    </citation>
    <scope>NUCLEOTIDE SEQUENCE [LARGE SCALE GENOMIC DNA]</scope>
    <source>
        <strain>ATCC 35395 / DSM 2834 / JCM 12185 / C2A</strain>
    </source>
</reference>
<gene>
    <name evidence="1" type="primary">queE</name>
    <name type="ordered locus">MA_4197</name>
</gene>
<accession>Q8TIF5</accession>
<comment type="function">
    <text evidence="1">Catalyzes the complex heterocyclic radical-mediated conversion of 6-carboxy-5,6,7,8-tetrahydropterin (CPH4) to 7-carboxy-7-deazaguanine (CDG), a step common to the biosynthetic pathways of all 7-deazapurine-containing compounds.</text>
</comment>
<comment type="catalytic activity">
    <reaction evidence="1">
        <text>6-carboxy-5,6,7,8-tetrahydropterin + H(+) = 7-carboxy-7-deazaguanine + NH4(+)</text>
        <dbReference type="Rhea" id="RHEA:27974"/>
        <dbReference type="ChEBI" id="CHEBI:15378"/>
        <dbReference type="ChEBI" id="CHEBI:28938"/>
        <dbReference type="ChEBI" id="CHEBI:61032"/>
        <dbReference type="ChEBI" id="CHEBI:61036"/>
        <dbReference type="EC" id="4.3.99.3"/>
    </reaction>
</comment>
<comment type="cofactor">
    <cofactor evidence="1">
        <name>[4Fe-4S] cluster</name>
        <dbReference type="ChEBI" id="CHEBI:49883"/>
    </cofactor>
    <text evidence="1">Binds 1 [4Fe-4S] cluster. The cluster is coordinated with 3 cysteines and an exchangeable S-adenosyl-L-methionine.</text>
</comment>
<comment type="cofactor">
    <cofactor evidence="1">
        <name>S-adenosyl-L-methionine</name>
        <dbReference type="ChEBI" id="CHEBI:59789"/>
    </cofactor>
    <text evidence="1">Binds 1 S-adenosyl-L-methionine per subunit.</text>
</comment>
<comment type="cofactor">
    <cofactor evidence="1">
        <name>Mg(2+)</name>
        <dbReference type="ChEBI" id="CHEBI:18420"/>
    </cofactor>
</comment>
<comment type="pathway">
    <text evidence="1">Purine metabolism; 7-cyano-7-deazaguanine biosynthesis.</text>
</comment>
<comment type="subunit">
    <text evidence="1">Homodimer.</text>
</comment>
<comment type="similarity">
    <text evidence="1">Belongs to the radical SAM superfamily. 7-carboxy-7-deazaguanine synthase family.</text>
</comment>
<feature type="chain" id="PRO_0000416219" description="7-carboxy-7-deazaguanine synthase">
    <location>
        <begin position="1"/>
        <end position="255"/>
    </location>
</feature>
<feature type="domain" description="Radical SAM core" evidence="2">
    <location>
        <begin position="24"/>
        <end position="255"/>
    </location>
</feature>
<feature type="binding site" evidence="1">
    <location>
        <begin position="18"/>
        <end position="20"/>
    </location>
    <ligand>
        <name>substrate</name>
    </ligand>
</feature>
<feature type="binding site" evidence="1">
    <location>
        <position position="33"/>
    </location>
    <ligand>
        <name>substrate</name>
    </ligand>
</feature>
<feature type="binding site" evidence="1">
    <location>
        <position position="37"/>
    </location>
    <ligand>
        <name>[4Fe-4S] cluster</name>
        <dbReference type="ChEBI" id="CHEBI:49883"/>
        <note>4Fe-4S-S-AdoMet</note>
    </ligand>
</feature>
<feature type="binding site" evidence="1">
    <location>
        <position position="41"/>
    </location>
    <ligand>
        <name>[4Fe-4S] cluster</name>
        <dbReference type="ChEBI" id="CHEBI:49883"/>
        <note>4Fe-4S-S-AdoMet</note>
    </ligand>
</feature>
<feature type="binding site" evidence="1">
    <location>
        <position position="44"/>
    </location>
    <ligand>
        <name>[4Fe-4S] cluster</name>
        <dbReference type="ChEBI" id="CHEBI:49883"/>
        <note>4Fe-4S-S-AdoMet</note>
    </ligand>
</feature>
<feature type="binding site" evidence="1">
    <location>
        <position position="46"/>
    </location>
    <ligand>
        <name>Mg(2+)</name>
        <dbReference type="ChEBI" id="CHEBI:18420"/>
    </ligand>
</feature>
<feature type="binding site" evidence="1">
    <location>
        <position position="93"/>
    </location>
    <ligand>
        <name>substrate</name>
    </ligand>
</feature>
<feature type="binding site" evidence="1">
    <location>
        <position position="95"/>
    </location>
    <ligand>
        <name>S-adenosyl-L-methionine</name>
        <dbReference type="ChEBI" id="CHEBI:59789"/>
    </ligand>
</feature>
<keyword id="KW-0004">4Fe-4S</keyword>
<keyword id="KW-0408">Iron</keyword>
<keyword id="KW-0411">Iron-sulfur</keyword>
<keyword id="KW-0456">Lyase</keyword>
<keyword id="KW-0460">Magnesium</keyword>
<keyword id="KW-0479">Metal-binding</keyword>
<keyword id="KW-1185">Reference proteome</keyword>
<keyword id="KW-0949">S-adenosyl-L-methionine</keyword>
<proteinExistence type="inferred from homology"/>
<name>QUEE_METAC</name>